<name>TAF12_DROME</name>
<keyword id="KW-0024">Alternative initiation</keyword>
<keyword id="KW-0903">Direct protein sequencing</keyword>
<keyword id="KW-0539">Nucleus</keyword>
<keyword id="KW-1185">Reference proteome</keyword>
<keyword id="KW-0804">Transcription</keyword>
<keyword id="KW-0805">Transcription regulation</keyword>
<reference key="1">
    <citation type="journal article" date="1994" name="Nature">
        <title>Molecular cloning of Drosophila TFIID subunits.</title>
        <authorList>
            <person name="Kokubo T."/>
            <person name="Gong D.-W."/>
            <person name="Wootton J.C."/>
            <person name="Horikoshi M."/>
            <person name="Roeder R.G."/>
            <person name="Nakatani Y."/>
        </authorList>
    </citation>
    <scope>NUCLEOTIDE SEQUENCE [MRNA] (ISOFORMS 22 KDA AND 28 KDA)</scope>
    <scope>ALTERNATIVE INITIATION</scope>
    <scope>PROTEIN SEQUENCE OF 147-173</scope>
</reference>
<reference key="2">
    <citation type="journal article" date="1993" name="Genes Dev.">
        <title>Molecular cloning and characterization of dTAFII30 alpha and dTAFII30 beta: two small subunits of Drosophila TFIID.</title>
        <authorList>
            <person name="Yokomori K."/>
            <person name="Chen J.L."/>
            <person name="Admon A."/>
            <person name="Zhou S."/>
            <person name="Tjian R."/>
        </authorList>
    </citation>
    <scope>NUCLEOTIDE SEQUENCE [MRNA] (ISOFORM 28 KDA)</scope>
    <scope>INTERACTION WITH TBP; TAF2 AND TAF4</scope>
</reference>
<reference key="3">
    <citation type="journal article" date="2000" name="Science">
        <title>The genome sequence of Drosophila melanogaster.</title>
        <authorList>
            <person name="Adams M.D."/>
            <person name="Celniker S.E."/>
            <person name="Holt R.A."/>
            <person name="Evans C.A."/>
            <person name="Gocayne J.D."/>
            <person name="Amanatides P.G."/>
            <person name="Scherer S.E."/>
            <person name="Li P.W."/>
            <person name="Hoskins R.A."/>
            <person name="Galle R.F."/>
            <person name="George R.A."/>
            <person name="Lewis S.E."/>
            <person name="Richards S."/>
            <person name="Ashburner M."/>
            <person name="Henderson S.N."/>
            <person name="Sutton G.G."/>
            <person name="Wortman J.R."/>
            <person name="Yandell M.D."/>
            <person name="Zhang Q."/>
            <person name="Chen L.X."/>
            <person name="Brandon R.C."/>
            <person name="Rogers Y.-H.C."/>
            <person name="Blazej R.G."/>
            <person name="Champe M."/>
            <person name="Pfeiffer B.D."/>
            <person name="Wan K.H."/>
            <person name="Doyle C."/>
            <person name="Baxter E.G."/>
            <person name="Helt G."/>
            <person name="Nelson C.R."/>
            <person name="Miklos G.L.G."/>
            <person name="Abril J.F."/>
            <person name="Agbayani A."/>
            <person name="An H.-J."/>
            <person name="Andrews-Pfannkoch C."/>
            <person name="Baldwin D."/>
            <person name="Ballew R.M."/>
            <person name="Basu A."/>
            <person name="Baxendale J."/>
            <person name="Bayraktaroglu L."/>
            <person name="Beasley E.M."/>
            <person name="Beeson K.Y."/>
            <person name="Benos P.V."/>
            <person name="Berman B.P."/>
            <person name="Bhandari D."/>
            <person name="Bolshakov S."/>
            <person name="Borkova D."/>
            <person name="Botchan M.R."/>
            <person name="Bouck J."/>
            <person name="Brokstein P."/>
            <person name="Brottier P."/>
            <person name="Burtis K.C."/>
            <person name="Busam D.A."/>
            <person name="Butler H."/>
            <person name="Cadieu E."/>
            <person name="Center A."/>
            <person name="Chandra I."/>
            <person name="Cherry J.M."/>
            <person name="Cawley S."/>
            <person name="Dahlke C."/>
            <person name="Davenport L.B."/>
            <person name="Davies P."/>
            <person name="de Pablos B."/>
            <person name="Delcher A."/>
            <person name="Deng Z."/>
            <person name="Mays A.D."/>
            <person name="Dew I."/>
            <person name="Dietz S.M."/>
            <person name="Dodson K."/>
            <person name="Doup L.E."/>
            <person name="Downes M."/>
            <person name="Dugan-Rocha S."/>
            <person name="Dunkov B.C."/>
            <person name="Dunn P."/>
            <person name="Durbin K.J."/>
            <person name="Evangelista C.C."/>
            <person name="Ferraz C."/>
            <person name="Ferriera S."/>
            <person name="Fleischmann W."/>
            <person name="Fosler C."/>
            <person name="Gabrielian A.E."/>
            <person name="Garg N.S."/>
            <person name="Gelbart W.M."/>
            <person name="Glasser K."/>
            <person name="Glodek A."/>
            <person name="Gong F."/>
            <person name="Gorrell J.H."/>
            <person name="Gu Z."/>
            <person name="Guan P."/>
            <person name="Harris M."/>
            <person name="Harris N.L."/>
            <person name="Harvey D.A."/>
            <person name="Heiman T.J."/>
            <person name="Hernandez J.R."/>
            <person name="Houck J."/>
            <person name="Hostin D."/>
            <person name="Houston K.A."/>
            <person name="Howland T.J."/>
            <person name="Wei M.-H."/>
            <person name="Ibegwam C."/>
            <person name="Jalali M."/>
            <person name="Kalush F."/>
            <person name="Karpen G.H."/>
            <person name="Ke Z."/>
            <person name="Kennison J.A."/>
            <person name="Ketchum K.A."/>
            <person name="Kimmel B.E."/>
            <person name="Kodira C.D."/>
            <person name="Kraft C.L."/>
            <person name="Kravitz S."/>
            <person name="Kulp D."/>
            <person name="Lai Z."/>
            <person name="Lasko P."/>
            <person name="Lei Y."/>
            <person name="Levitsky A.A."/>
            <person name="Li J.H."/>
            <person name="Li Z."/>
            <person name="Liang Y."/>
            <person name="Lin X."/>
            <person name="Liu X."/>
            <person name="Mattei B."/>
            <person name="McIntosh T.C."/>
            <person name="McLeod M.P."/>
            <person name="McPherson D."/>
            <person name="Merkulov G."/>
            <person name="Milshina N.V."/>
            <person name="Mobarry C."/>
            <person name="Morris J."/>
            <person name="Moshrefi A."/>
            <person name="Mount S.M."/>
            <person name="Moy M."/>
            <person name="Murphy B."/>
            <person name="Murphy L."/>
            <person name="Muzny D.M."/>
            <person name="Nelson D.L."/>
            <person name="Nelson D.R."/>
            <person name="Nelson K.A."/>
            <person name="Nixon K."/>
            <person name="Nusskern D.R."/>
            <person name="Pacleb J.M."/>
            <person name="Palazzolo M."/>
            <person name="Pittman G.S."/>
            <person name="Pan S."/>
            <person name="Pollard J."/>
            <person name="Puri V."/>
            <person name="Reese M.G."/>
            <person name="Reinert K."/>
            <person name="Remington K."/>
            <person name="Saunders R.D.C."/>
            <person name="Scheeler F."/>
            <person name="Shen H."/>
            <person name="Shue B.C."/>
            <person name="Siden-Kiamos I."/>
            <person name="Simpson M."/>
            <person name="Skupski M.P."/>
            <person name="Smith T.J."/>
            <person name="Spier E."/>
            <person name="Spradling A.C."/>
            <person name="Stapleton M."/>
            <person name="Strong R."/>
            <person name="Sun E."/>
            <person name="Svirskas R."/>
            <person name="Tector C."/>
            <person name="Turner R."/>
            <person name="Venter E."/>
            <person name="Wang A.H."/>
            <person name="Wang X."/>
            <person name="Wang Z.-Y."/>
            <person name="Wassarman D.A."/>
            <person name="Weinstock G.M."/>
            <person name="Weissenbach J."/>
            <person name="Williams S.M."/>
            <person name="Woodage T."/>
            <person name="Worley K.C."/>
            <person name="Wu D."/>
            <person name="Yang S."/>
            <person name="Yao Q.A."/>
            <person name="Ye J."/>
            <person name="Yeh R.-F."/>
            <person name="Zaveri J.S."/>
            <person name="Zhan M."/>
            <person name="Zhang G."/>
            <person name="Zhao Q."/>
            <person name="Zheng L."/>
            <person name="Zheng X.H."/>
            <person name="Zhong F.N."/>
            <person name="Zhong W."/>
            <person name="Zhou X."/>
            <person name="Zhu S.C."/>
            <person name="Zhu X."/>
            <person name="Smith H.O."/>
            <person name="Gibbs R.A."/>
            <person name="Myers E.W."/>
            <person name="Rubin G.M."/>
            <person name="Venter J.C."/>
        </authorList>
    </citation>
    <scope>NUCLEOTIDE SEQUENCE [LARGE SCALE GENOMIC DNA]</scope>
    <source>
        <strain>Berkeley</strain>
    </source>
</reference>
<reference key="4">
    <citation type="journal article" date="2002" name="Genome Biol.">
        <title>Annotation of the Drosophila melanogaster euchromatic genome: a systematic review.</title>
        <authorList>
            <person name="Misra S."/>
            <person name="Crosby M.A."/>
            <person name="Mungall C.J."/>
            <person name="Matthews B.B."/>
            <person name="Campbell K.S."/>
            <person name="Hradecky P."/>
            <person name="Huang Y."/>
            <person name="Kaminker J.S."/>
            <person name="Millburn G.H."/>
            <person name="Prochnik S.E."/>
            <person name="Smith C.D."/>
            <person name="Tupy J.L."/>
            <person name="Whitfield E.J."/>
            <person name="Bayraktaroglu L."/>
            <person name="Berman B.P."/>
            <person name="Bettencourt B.R."/>
            <person name="Celniker S.E."/>
            <person name="de Grey A.D.N.J."/>
            <person name="Drysdale R.A."/>
            <person name="Harris N.L."/>
            <person name="Richter J."/>
            <person name="Russo S."/>
            <person name="Schroeder A.J."/>
            <person name="Shu S.Q."/>
            <person name="Stapleton M."/>
            <person name="Yamada C."/>
            <person name="Ashburner M."/>
            <person name="Gelbart W.M."/>
            <person name="Rubin G.M."/>
            <person name="Lewis S.E."/>
        </authorList>
    </citation>
    <scope>GENOME REANNOTATION</scope>
    <scope>ALTERNATIVE INITIATION</scope>
    <source>
        <strain>Berkeley</strain>
    </source>
</reference>
<reference key="5">
    <citation type="journal article" date="2002" name="Genome Biol.">
        <title>A Drosophila full-length cDNA resource.</title>
        <authorList>
            <person name="Stapleton M."/>
            <person name="Carlson J.W."/>
            <person name="Brokstein P."/>
            <person name="Yu C."/>
            <person name="Champe M."/>
            <person name="George R.A."/>
            <person name="Guarin H."/>
            <person name="Kronmiller B."/>
            <person name="Pacleb J.M."/>
            <person name="Park S."/>
            <person name="Wan K.H."/>
            <person name="Rubin G.M."/>
            <person name="Celniker S.E."/>
        </authorList>
    </citation>
    <scope>NUCLEOTIDE SEQUENCE [LARGE SCALE MRNA] (ISOFORM 28 KDA)</scope>
    <source>
        <strain>Berkeley</strain>
        <tissue>Embryo</tissue>
    </source>
</reference>
<proteinExistence type="evidence at protein level"/>
<accession>P49905</accession>
<accession>A4V2Q1</accession>
<accession>Q26339</accession>
<accession>Q9VGK0</accession>
<gene>
    <name type="primary">Taf12</name>
    <name type="synonym">TAF30-ALPHA</name>
    <name type="ORF">CG17358</name>
</gene>
<feature type="chain" id="PRO_0000033584" description="Transcription initiation factor TFIID subunit 12">
    <location>
        <begin position="1"/>
        <end position="196"/>
    </location>
</feature>
<feature type="domain" description="Histone-fold" evidence="1">
    <location>
        <begin position="93"/>
        <end position="160"/>
    </location>
</feature>
<feature type="region of interest" description="Disordered" evidence="2">
    <location>
        <begin position="17"/>
        <end position="97"/>
    </location>
</feature>
<feature type="compositionally biased region" description="Low complexity" evidence="2">
    <location>
        <begin position="48"/>
        <end position="58"/>
    </location>
</feature>
<feature type="compositionally biased region" description="Gly residues" evidence="2">
    <location>
        <begin position="59"/>
        <end position="71"/>
    </location>
</feature>
<feature type="compositionally biased region" description="Low complexity" evidence="2">
    <location>
        <begin position="72"/>
        <end position="86"/>
    </location>
</feature>
<feature type="splice variant" id="VSP_018890" description="In isoform 22 kDa." evidence="4">
    <location>
        <begin position="1"/>
        <end position="36"/>
    </location>
</feature>
<feature type="sequence conflict" description="In Ref. 2; AAB29540." evidence="5" ref="2">
    <original>E</original>
    <variation>R</variation>
    <location>
        <position position="15"/>
    </location>
</feature>
<feature type="sequence conflict" description="In Ref. 2; AAB29540." evidence="5" ref="2">
    <original>E</original>
    <variation>R</variation>
    <location>
        <position position="127"/>
    </location>
</feature>
<organism>
    <name type="scientific">Drosophila melanogaster</name>
    <name type="common">Fruit fly</name>
    <dbReference type="NCBI Taxonomy" id="7227"/>
    <lineage>
        <taxon>Eukaryota</taxon>
        <taxon>Metazoa</taxon>
        <taxon>Ecdysozoa</taxon>
        <taxon>Arthropoda</taxon>
        <taxon>Hexapoda</taxon>
        <taxon>Insecta</taxon>
        <taxon>Pterygota</taxon>
        <taxon>Neoptera</taxon>
        <taxon>Endopterygota</taxon>
        <taxon>Diptera</taxon>
        <taxon>Brachycera</taxon>
        <taxon>Muscomorpha</taxon>
        <taxon>Ephydroidea</taxon>
        <taxon>Drosophilidae</taxon>
        <taxon>Drosophila</taxon>
        <taxon>Sophophora</taxon>
    </lineage>
</organism>
<comment type="function">
    <text>TFIID is a multimeric protein complex that plays a central role in mediating promoter responses to various activators and repressors.</text>
</comment>
<comment type="subunit">
    <text evidence="3">Belongs to the TFIID complex which is composed of TATA binding protein (Tbp) and a number of TBP-associated factors (TAFs). Interacts with Tbp, Taf2 and Taf4.</text>
</comment>
<comment type="subcellular location">
    <subcellularLocation>
        <location>Nucleus</location>
    </subcellularLocation>
</comment>
<comment type="alternative products">
    <event type="alternative initiation"/>
    <isoform>
        <id>P49905-1</id>
        <name>28 kDa</name>
        <name>A</name>
        <name>B</name>
        <sequence type="displayed"/>
    </isoform>
    <isoform>
        <id>P49905-2</id>
        <name>22 kDa</name>
        <name>D</name>
        <sequence type="described" ref="VSP_018890"/>
    </isoform>
</comment>
<comment type="similarity">
    <text evidence="5">Belongs to the TAF12 family.</text>
</comment>
<protein>
    <recommendedName>
        <fullName>Transcription initiation factor TFIID subunit 12</fullName>
    </recommendedName>
    <alternativeName>
        <fullName>TAFII30 alpha</fullName>
    </alternativeName>
    <alternativeName>
        <fullName>Transcription initiation factor TFIID 28-alpha kDa/22 kDa subunits</fullName>
    </alternativeName>
    <alternativeName>
        <fullName>p28-alpha/p22</fullName>
    </alternativeName>
</protein>
<evidence type="ECO:0000255" key="1"/>
<evidence type="ECO:0000256" key="2">
    <source>
        <dbReference type="SAM" id="MobiDB-lite"/>
    </source>
</evidence>
<evidence type="ECO:0000269" key="3">
    <source>
    </source>
</evidence>
<evidence type="ECO:0000303" key="4">
    <source>
    </source>
</evidence>
<evidence type="ECO:0000305" key="5"/>
<dbReference type="EMBL" id="U06450">
    <property type="protein sequence ID" value="AAC46479.1"/>
    <property type="molecule type" value="mRNA"/>
</dbReference>
<dbReference type="EMBL" id="U06456">
    <property type="protein sequence ID" value="AAB19244.1"/>
    <property type="molecule type" value="mRNA"/>
</dbReference>
<dbReference type="EMBL" id="S67741">
    <property type="protein sequence ID" value="AAB29540.1"/>
    <property type="molecule type" value="mRNA"/>
</dbReference>
<dbReference type="EMBL" id="AE014297">
    <property type="protein sequence ID" value="AAF54677.1"/>
    <property type="molecule type" value="Genomic_DNA"/>
</dbReference>
<dbReference type="EMBL" id="AE014297">
    <property type="protein sequence ID" value="AAF54678.1"/>
    <property type="molecule type" value="Genomic_DNA"/>
</dbReference>
<dbReference type="EMBL" id="AE014297">
    <property type="protein sequence ID" value="AAF54679.2"/>
    <property type="molecule type" value="Genomic_DNA"/>
</dbReference>
<dbReference type="EMBL" id="AY061435">
    <property type="protein sequence ID" value="AAL28983.1"/>
    <property type="molecule type" value="mRNA"/>
</dbReference>
<dbReference type="PIR" id="A49453">
    <property type="entry name" value="A49453"/>
</dbReference>
<dbReference type="PIR" id="S42222">
    <property type="entry name" value="S42222"/>
</dbReference>
<dbReference type="RefSeq" id="NP_001262479.1">
    <molecule id="P49905-2"/>
    <property type="nucleotide sequence ID" value="NM_001275550.1"/>
</dbReference>
<dbReference type="RefSeq" id="NP_524320.1">
    <molecule id="P49905-1"/>
    <property type="nucleotide sequence ID" value="NM_079596.3"/>
</dbReference>
<dbReference type="RefSeq" id="NP_731616.1">
    <molecule id="P49905-1"/>
    <property type="nucleotide sequence ID" value="NM_169420.2"/>
</dbReference>
<dbReference type="RefSeq" id="NP_731617.2">
    <molecule id="P49905-2"/>
    <property type="nucleotide sequence ID" value="NM_169421.3"/>
</dbReference>
<dbReference type="SMR" id="P49905"/>
<dbReference type="BioGRID" id="66532">
    <property type="interactions" value="55"/>
</dbReference>
<dbReference type="ComplexPortal" id="CPX-2644">
    <property type="entry name" value="SAGA complex"/>
</dbReference>
<dbReference type="DIP" id="DIP-779N"/>
<dbReference type="FunCoup" id="P49905">
    <property type="interactions" value="1512"/>
</dbReference>
<dbReference type="IntAct" id="P49905">
    <property type="interactions" value="7"/>
</dbReference>
<dbReference type="STRING" id="7227.FBpp0081918"/>
<dbReference type="PaxDb" id="7227-FBpp0081916"/>
<dbReference type="DNASU" id="41406"/>
<dbReference type="EnsemblMetazoa" id="FBtr0082440">
    <molecule id="P49905-1"/>
    <property type="protein sequence ID" value="FBpp0081916"/>
    <property type="gene ID" value="FBgn0011290"/>
</dbReference>
<dbReference type="EnsemblMetazoa" id="FBtr0082442">
    <molecule id="P49905-1"/>
    <property type="protein sequence ID" value="FBpp0081918"/>
    <property type="gene ID" value="FBgn0011290"/>
</dbReference>
<dbReference type="EnsemblMetazoa" id="FBtr0290205">
    <molecule id="P49905-2"/>
    <property type="protein sequence ID" value="FBpp0288644"/>
    <property type="gene ID" value="FBgn0011290"/>
</dbReference>
<dbReference type="EnsemblMetazoa" id="FBtr0335213">
    <molecule id="P49905-2"/>
    <property type="protein sequence ID" value="FBpp0307200"/>
    <property type="gene ID" value="FBgn0011290"/>
</dbReference>
<dbReference type="GeneID" id="41406"/>
<dbReference type="KEGG" id="dme:Dmel_CG17358"/>
<dbReference type="AGR" id="FB:FBgn0011290"/>
<dbReference type="CTD" id="6883"/>
<dbReference type="FlyBase" id="FBgn0011290">
    <property type="gene designation" value="Taf12"/>
</dbReference>
<dbReference type="VEuPathDB" id="VectorBase:FBgn0011290"/>
<dbReference type="eggNOG" id="KOG1142">
    <property type="taxonomic scope" value="Eukaryota"/>
</dbReference>
<dbReference type="GeneTree" id="ENSGT00390000002144"/>
<dbReference type="InParanoid" id="P49905"/>
<dbReference type="OMA" id="HRRDTTV"/>
<dbReference type="OrthoDB" id="2193432at2759"/>
<dbReference type="PhylomeDB" id="P49905"/>
<dbReference type="Reactome" id="R-DME-674695">
    <property type="pathway name" value="RNA Polymerase II Pre-transcription Events"/>
</dbReference>
<dbReference type="Reactome" id="R-DME-6804756">
    <property type="pathway name" value="Regulation of TP53 Activity through Phosphorylation"/>
</dbReference>
<dbReference type="Reactome" id="R-DME-73776">
    <property type="pathway name" value="RNA Polymerase II Promoter Escape"/>
</dbReference>
<dbReference type="Reactome" id="R-DME-73779">
    <property type="pathway name" value="RNA Polymerase II Transcription Pre-Initiation And Promoter Opening"/>
</dbReference>
<dbReference type="Reactome" id="R-DME-75953">
    <property type="pathway name" value="RNA Polymerase II Transcription Initiation"/>
</dbReference>
<dbReference type="Reactome" id="R-DME-76042">
    <property type="pathway name" value="RNA Polymerase II Transcription Initiation And Promoter Clearance"/>
</dbReference>
<dbReference type="SignaLink" id="P49905"/>
<dbReference type="BioGRID-ORCS" id="41406">
    <property type="hits" value="0 hits in 1 CRISPR screen"/>
</dbReference>
<dbReference type="GenomeRNAi" id="41406"/>
<dbReference type="PRO" id="PR:P49905"/>
<dbReference type="Proteomes" id="UP000000803">
    <property type="component" value="Chromosome 3R"/>
</dbReference>
<dbReference type="Bgee" id="FBgn0011290">
    <property type="expression patterns" value="Expressed in mechanosensory neuron of leg chordotonal organ in insect leg and 230 other cell types or tissues"/>
</dbReference>
<dbReference type="ExpressionAtlas" id="P49905">
    <property type="expression patterns" value="baseline and differential"/>
</dbReference>
<dbReference type="GO" id="GO:0005634">
    <property type="term" value="C:nucleus"/>
    <property type="evidence" value="ECO:0000314"/>
    <property type="project" value="FlyBase"/>
</dbReference>
<dbReference type="GO" id="GO:0000124">
    <property type="term" value="C:SAGA complex"/>
    <property type="evidence" value="ECO:0000314"/>
    <property type="project" value="FlyBase"/>
</dbReference>
<dbReference type="GO" id="GO:0005669">
    <property type="term" value="C:transcription factor TFIID complex"/>
    <property type="evidence" value="ECO:0000314"/>
    <property type="project" value="FlyBase"/>
</dbReference>
<dbReference type="GO" id="GO:0003677">
    <property type="term" value="F:DNA binding"/>
    <property type="evidence" value="ECO:0000318"/>
    <property type="project" value="GO_Central"/>
</dbReference>
<dbReference type="GO" id="GO:0046982">
    <property type="term" value="F:protein heterodimerization activity"/>
    <property type="evidence" value="ECO:0007669"/>
    <property type="project" value="InterPro"/>
</dbReference>
<dbReference type="GO" id="GO:0017025">
    <property type="term" value="F:TBP-class protein binding"/>
    <property type="evidence" value="ECO:0000318"/>
    <property type="project" value="GO_Central"/>
</dbReference>
<dbReference type="GO" id="GO:0051123">
    <property type="term" value="P:RNA polymerase II preinitiation complex assembly"/>
    <property type="evidence" value="ECO:0000318"/>
    <property type="project" value="GO_Central"/>
</dbReference>
<dbReference type="GO" id="GO:0006367">
    <property type="term" value="P:transcription initiation at RNA polymerase II promoter"/>
    <property type="evidence" value="ECO:0000250"/>
    <property type="project" value="FlyBase"/>
</dbReference>
<dbReference type="CDD" id="cd07981">
    <property type="entry name" value="HFD_TAF12"/>
    <property type="match status" value="1"/>
</dbReference>
<dbReference type="FunFam" id="1.10.20.10:FF:000011">
    <property type="entry name" value="Transcription initiation factor TFIID subunit 12"/>
    <property type="match status" value="1"/>
</dbReference>
<dbReference type="Gene3D" id="1.10.20.10">
    <property type="entry name" value="Histone, subunit A"/>
    <property type="match status" value="1"/>
</dbReference>
<dbReference type="InterPro" id="IPR009072">
    <property type="entry name" value="Histone-fold"/>
</dbReference>
<dbReference type="InterPro" id="IPR037794">
    <property type="entry name" value="TAF12"/>
</dbReference>
<dbReference type="InterPro" id="IPR003228">
    <property type="entry name" value="TFIID_TAF12_dom"/>
</dbReference>
<dbReference type="PANTHER" id="PTHR12264">
    <property type="entry name" value="TRANSCRIPTION INITIATION FACTOR TFIID SUBUNIT 12"/>
    <property type="match status" value="1"/>
</dbReference>
<dbReference type="PANTHER" id="PTHR12264:SF21">
    <property type="entry name" value="TRANSCRIPTION INITIATION FACTOR TFIID SUBUNIT 12"/>
    <property type="match status" value="1"/>
</dbReference>
<dbReference type="Pfam" id="PF03847">
    <property type="entry name" value="TFIID_20kDa"/>
    <property type="match status" value="1"/>
</dbReference>
<dbReference type="SUPFAM" id="SSF47113">
    <property type="entry name" value="Histone-fold"/>
    <property type="match status" value="1"/>
</dbReference>
<sequence length="196" mass="21523">MSDLFTTFDSNGVAEHHLHHNHNSTSSASGLLHDPPMASPSQHSPMTNNSNSSSQNGGPVSGLGTGTGPISGGSKSSNHTSSAAGSENTPMLTKPRLTELVREVDTTTQLDEDVEELLLQIIDDFVEDTVKSTSAFAKHRKSNKIEVRDVQLHFERKYNMWIPGFGTDELRPYKRAAVTEAHKQRLALIRKTIKKY</sequence>